<keyword id="KW-0131">Cell cycle</keyword>
<keyword id="KW-0132">Cell division</keyword>
<keyword id="KW-0997">Cell inner membrane</keyword>
<keyword id="KW-1003">Cell membrane</keyword>
<keyword id="KW-0175">Coiled coil</keyword>
<keyword id="KW-0472">Membrane</keyword>
<keyword id="KW-0812">Transmembrane</keyword>
<keyword id="KW-1133">Transmembrane helix</keyword>
<proteinExistence type="inferred from homology"/>
<comment type="function">
    <text evidence="1">Essential cell division protein. May link together the upstream cell division proteins, which are predominantly cytoplasmic, with the downstream cell division proteins, which are predominantly periplasmic.</text>
</comment>
<comment type="subunit">
    <text evidence="1">Part of a complex composed of FtsB, FtsL and FtsQ.</text>
</comment>
<comment type="subcellular location">
    <subcellularLocation>
        <location evidence="1">Cell inner membrane</location>
        <topology evidence="1">Single-pass type II membrane protein</topology>
    </subcellularLocation>
    <text evidence="1">Localizes to the division septum.</text>
</comment>
<comment type="similarity">
    <text evidence="1">Belongs to the FtsB family.</text>
</comment>
<dbReference type="EMBL" id="CP000946">
    <property type="protein sequence ID" value="ACA76633.1"/>
    <property type="molecule type" value="Genomic_DNA"/>
</dbReference>
<dbReference type="RefSeq" id="WP_000517476.1">
    <property type="nucleotide sequence ID" value="NZ_MTFT01000049.1"/>
</dbReference>
<dbReference type="SMR" id="B1IUT1"/>
<dbReference type="GeneID" id="93779258"/>
<dbReference type="KEGG" id="ecl:EcolC_0964"/>
<dbReference type="HOGENOM" id="CLU_134863_5_2_6"/>
<dbReference type="GO" id="GO:0032153">
    <property type="term" value="C:cell division site"/>
    <property type="evidence" value="ECO:0007669"/>
    <property type="project" value="UniProtKB-UniRule"/>
</dbReference>
<dbReference type="GO" id="GO:0030428">
    <property type="term" value="C:cell septum"/>
    <property type="evidence" value="ECO:0007669"/>
    <property type="project" value="TreeGrafter"/>
</dbReference>
<dbReference type="GO" id="GO:0005886">
    <property type="term" value="C:plasma membrane"/>
    <property type="evidence" value="ECO:0007669"/>
    <property type="project" value="UniProtKB-SubCell"/>
</dbReference>
<dbReference type="GO" id="GO:0043093">
    <property type="term" value="P:FtsZ-dependent cytokinesis"/>
    <property type="evidence" value="ECO:0007669"/>
    <property type="project" value="UniProtKB-UniRule"/>
</dbReference>
<dbReference type="FunFam" id="1.20.5.400:FF:000001">
    <property type="entry name" value="Cell division protein FtsB"/>
    <property type="match status" value="1"/>
</dbReference>
<dbReference type="Gene3D" id="1.20.5.400">
    <property type="match status" value="1"/>
</dbReference>
<dbReference type="HAMAP" id="MF_00599">
    <property type="entry name" value="FtsB"/>
    <property type="match status" value="1"/>
</dbReference>
<dbReference type="InterPro" id="IPR023081">
    <property type="entry name" value="Cell_div_FtsB"/>
</dbReference>
<dbReference type="InterPro" id="IPR007060">
    <property type="entry name" value="FtsL/DivIC"/>
</dbReference>
<dbReference type="NCBIfam" id="NF002058">
    <property type="entry name" value="PRK00888.1"/>
    <property type="match status" value="1"/>
</dbReference>
<dbReference type="PANTHER" id="PTHR37485">
    <property type="entry name" value="CELL DIVISION PROTEIN FTSB"/>
    <property type="match status" value="1"/>
</dbReference>
<dbReference type="PANTHER" id="PTHR37485:SF1">
    <property type="entry name" value="CELL DIVISION PROTEIN FTSB"/>
    <property type="match status" value="1"/>
</dbReference>
<dbReference type="Pfam" id="PF04977">
    <property type="entry name" value="DivIC"/>
    <property type="match status" value="1"/>
</dbReference>
<organism>
    <name type="scientific">Escherichia coli (strain ATCC 8739 / DSM 1576 / NBRC 3972 / NCIMB 8545 / WDCM 00012 / Crooks)</name>
    <dbReference type="NCBI Taxonomy" id="481805"/>
    <lineage>
        <taxon>Bacteria</taxon>
        <taxon>Pseudomonadati</taxon>
        <taxon>Pseudomonadota</taxon>
        <taxon>Gammaproteobacteria</taxon>
        <taxon>Enterobacterales</taxon>
        <taxon>Enterobacteriaceae</taxon>
        <taxon>Escherichia</taxon>
    </lineage>
</organism>
<feature type="chain" id="PRO_1000082453" description="Cell division protein FtsB">
    <location>
        <begin position="1"/>
        <end position="103"/>
    </location>
</feature>
<feature type="topological domain" description="Cytoplasmic" evidence="1">
    <location>
        <begin position="1"/>
        <end position="3"/>
    </location>
</feature>
<feature type="transmembrane region" description="Helical" evidence="1">
    <location>
        <begin position="4"/>
        <end position="21"/>
    </location>
</feature>
<feature type="topological domain" description="Periplasmic" evidence="1">
    <location>
        <begin position="22"/>
        <end position="103"/>
    </location>
</feature>
<feature type="coiled-coil region" evidence="1">
    <location>
        <begin position="31"/>
        <end position="71"/>
    </location>
</feature>
<reference key="1">
    <citation type="submission" date="2008-02" db="EMBL/GenBank/DDBJ databases">
        <title>Complete sequence of Escherichia coli C str. ATCC 8739.</title>
        <authorList>
            <person name="Copeland A."/>
            <person name="Lucas S."/>
            <person name="Lapidus A."/>
            <person name="Glavina del Rio T."/>
            <person name="Dalin E."/>
            <person name="Tice H."/>
            <person name="Bruce D."/>
            <person name="Goodwin L."/>
            <person name="Pitluck S."/>
            <person name="Kiss H."/>
            <person name="Brettin T."/>
            <person name="Detter J.C."/>
            <person name="Han C."/>
            <person name="Kuske C.R."/>
            <person name="Schmutz J."/>
            <person name="Larimer F."/>
            <person name="Land M."/>
            <person name="Hauser L."/>
            <person name="Kyrpides N."/>
            <person name="Mikhailova N."/>
            <person name="Ingram L."/>
            <person name="Richardson P."/>
        </authorList>
    </citation>
    <scope>NUCLEOTIDE SEQUENCE [LARGE SCALE GENOMIC DNA]</scope>
    <source>
        <strain>ATCC 8739 / DSM 1576 / NBRC 3972 / NCIMB 8545 / WDCM 00012 / Crooks</strain>
    </source>
</reference>
<sequence>MGKLTLLLLAILVWLQYSLWFGKNGIHDYTRVNDDVAAQQATNAKLKARNDQLFAEIDDLNGGQEALEERARNELSMTRPGETFYRLVPDASKRAQSAGQNNR</sequence>
<protein>
    <recommendedName>
        <fullName evidence="1">Cell division protein FtsB</fullName>
    </recommendedName>
</protein>
<gene>
    <name evidence="1" type="primary">ftsB</name>
    <name type="ordered locus">EcolC_0964</name>
</gene>
<evidence type="ECO:0000255" key="1">
    <source>
        <dbReference type="HAMAP-Rule" id="MF_00599"/>
    </source>
</evidence>
<accession>B1IUT1</accession>
<name>FTSB_ECOLC</name>